<comment type="function">
    <text evidence="1">Cell wall formation. Catalyzes the addition of glutamate to the nucleotide precursor UDP-N-acetylmuramoyl-L-alanine (UMA).</text>
</comment>
<comment type="catalytic activity">
    <reaction evidence="1">
        <text>UDP-N-acetyl-alpha-D-muramoyl-L-alanine + D-glutamate + ATP = UDP-N-acetyl-alpha-D-muramoyl-L-alanyl-D-glutamate + ADP + phosphate + H(+)</text>
        <dbReference type="Rhea" id="RHEA:16429"/>
        <dbReference type="ChEBI" id="CHEBI:15378"/>
        <dbReference type="ChEBI" id="CHEBI:29986"/>
        <dbReference type="ChEBI" id="CHEBI:30616"/>
        <dbReference type="ChEBI" id="CHEBI:43474"/>
        <dbReference type="ChEBI" id="CHEBI:83898"/>
        <dbReference type="ChEBI" id="CHEBI:83900"/>
        <dbReference type="ChEBI" id="CHEBI:456216"/>
        <dbReference type="EC" id="6.3.2.9"/>
    </reaction>
</comment>
<comment type="pathway">
    <text evidence="1">Cell wall biogenesis; peptidoglycan biosynthesis.</text>
</comment>
<comment type="subcellular location">
    <subcellularLocation>
        <location evidence="1">Cytoplasm</location>
    </subcellularLocation>
</comment>
<comment type="similarity">
    <text evidence="1">Belongs to the MurCDEF family.</text>
</comment>
<feature type="chain" id="PRO_1000056873" description="UDP-N-acetylmuramoylalanine--D-glutamate ligase">
    <location>
        <begin position="1"/>
        <end position="504"/>
    </location>
</feature>
<feature type="binding site" evidence="1">
    <location>
        <begin position="129"/>
        <end position="135"/>
    </location>
    <ligand>
        <name>ATP</name>
        <dbReference type="ChEBI" id="CHEBI:30616"/>
    </ligand>
</feature>
<evidence type="ECO:0000255" key="1">
    <source>
        <dbReference type="HAMAP-Rule" id="MF_00639"/>
    </source>
</evidence>
<accession>A3MR61</accession>
<sequence>MFGDRQRPMVLVLGLGESGLAIARWCARHGCRLRVADTRETPPNLAALTAAGVDFEFVGGAFSPALVDGGIELVALSPGLSPLAEDLAPLVAAARERGIPVWGELEFFAQALAALGANGYAPKVIAITGTNGKTTTTSLAGLLCERAGKKVAVAGNISPAMLDKLTEAIDAAALPDVWVLELSSFQLDTAHTFAPDAATILNITQDHLDWHGGFAAYAAAKGRVFGPRTVRVLNRDDAEVMRFAPPAAAADAPRAVTFGLNEPAADGDYGLLRENGIAWLVEAIDRDGADAPAAPSRRRKQEAANPPDIALKRLMPADALRIRGLHNAANALAAYALARAIGLPAAPLLHGLREYRGEPHRVEVIATLDGVDYVDDSKGTNVGATVAALDGLAQRAVLIAGGDGKGQDFEPLAAPVARWCRAVMLIGRDAPALREALADTGVPLADHATLEAAVRAASALAQPGDAVLLSPACASLDMFRNYAHRADVFRSAVEDIALEKGTTL</sequence>
<organism>
    <name type="scientific">Burkholderia mallei (strain NCTC 10247)</name>
    <dbReference type="NCBI Taxonomy" id="320389"/>
    <lineage>
        <taxon>Bacteria</taxon>
        <taxon>Pseudomonadati</taxon>
        <taxon>Pseudomonadota</taxon>
        <taxon>Betaproteobacteria</taxon>
        <taxon>Burkholderiales</taxon>
        <taxon>Burkholderiaceae</taxon>
        <taxon>Burkholderia</taxon>
        <taxon>pseudomallei group</taxon>
    </lineage>
</organism>
<reference key="1">
    <citation type="journal article" date="2010" name="Genome Biol. Evol.">
        <title>Continuing evolution of Burkholderia mallei through genome reduction and large-scale rearrangements.</title>
        <authorList>
            <person name="Losada L."/>
            <person name="Ronning C.M."/>
            <person name="DeShazer D."/>
            <person name="Woods D."/>
            <person name="Fedorova N."/>
            <person name="Kim H.S."/>
            <person name="Shabalina S.A."/>
            <person name="Pearson T.R."/>
            <person name="Brinkac L."/>
            <person name="Tan P."/>
            <person name="Nandi T."/>
            <person name="Crabtree J."/>
            <person name="Badger J."/>
            <person name="Beckstrom-Sternberg S."/>
            <person name="Saqib M."/>
            <person name="Schutzer S.E."/>
            <person name="Keim P."/>
            <person name="Nierman W.C."/>
        </authorList>
    </citation>
    <scope>NUCLEOTIDE SEQUENCE [LARGE SCALE GENOMIC DNA]</scope>
    <source>
        <strain>NCTC 10247</strain>
    </source>
</reference>
<gene>
    <name evidence="1" type="primary">murD</name>
    <name type="ordered locus">BMA10247_3230</name>
</gene>
<name>MURD_BURM7</name>
<protein>
    <recommendedName>
        <fullName evidence="1">UDP-N-acetylmuramoylalanine--D-glutamate ligase</fullName>
        <ecNumber evidence="1">6.3.2.9</ecNumber>
    </recommendedName>
    <alternativeName>
        <fullName evidence="1">D-glutamic acid-adding enzyme</fullName>
    </alternativeName>
    <alternativeName>
        <fullName evidence="1">UDP-N-acetylmuramoyl-L-alanyl-D-glutamate synthetase</fullName>
    </alternativeName>
</protein>
<keyword id="KW-0067">ATP-binding</keyword>
<keyword id="KW-0131">Cell cycle</keyword>
<keyword id="KW-0132">Cell division</keyword>
<keyword id="KW-0133">Cell shape</keyword>
<keyword id="KW-0961">Cell wall biogenesis/degradation</keyword>
<keyword id="KW-0963">Cytoplasm</keyword>
<keyword id="KW-0436">Ligase</keyword>
<keyword id="KW-0547">Nucleotide-binding</keyword>
<keyword id="KW-0573">Peptidoglycan synthesis</keyword>
<dbReference type="EC" id="6.3.2.9" evidence="1"/>
<dbReference type="EMBL" id="CP000548">
    <property type="protein sequence ID" value="ABO06184.1"/>
    <property type="molecule type" value="Genomic_DNA"/>
</dbReference>
<dbReference type="RefSeq" id="WP_004203798.1">
    <property type="nucleotide sequence ID" value="NZ_CP007802.1"/>
</dbReference>
<dbReference type="SMR" id="A3MR61"/>
<dbReference type="GeneID" id="93061629"/>
<dbReference type="KEGG" id="bmaz:BM44_139"/>
<dbReference type="KEGG" id="bmn:BMA10247_3230"/>
<dbReference type="PATRIC" id="fig|320389.8.peg.148"/>
<dbReference type="UniPathway" id="UPA00219"/>
<dbReference type="GO" id="GO:0005737">
    <property type="term" value="C:cytoplasm"/>
    <property type="evidence" value="ECO:0007669"/>
    <property type="project" value="UniProtKB-SubCell"/>
</dbReference>
<dbReference type="GO" id="GO:0005524">
    <property type="term" value="F:ATP binding"/>
    <property type="evidence" value="ECO:0007669"/>
    <property type="project" value="UniProtKB-UniRule"/>
</dbReference>
<dbReference type="GO" id="GO:0008764">
    <property type="term" value="F:UDP-N-acetylmuramoylalanine-D-glutamate ligase activity"/>
    <property type="evidence" value="ECO:0007669"/>
    <property type="project" value="UniProtKB-UniRule"/>
</dbReference>
<dbReference type="GO" id="GO:0051301">
    <property type="term" value="P:cell division"/>
    <property type="evidence" value="ECO:0007669"/>
    <property type="project" value="UniProtKB-KW"/>
</dbReference>
<dbReference type="GO" id="GO:0071555">
    <property type="term" value="P:cell wall organization"/>
    <property type="evidence" value="ECO:0007669"/>
    <property type="project" value="UniProtKB-KW"/>
</dbReference>
<dbReference type="GO" id="GO:0009252">
    <property type="term" value="P:peptidoglycan biosynthetic process"/>
    <property type="evidence" value="ECO:0007669"/>
    <property type="project" value="UniProtKB-UniRule"/>
</dbReference>
<dbReference type="GO" id="GO:0008360">
    <property type="term" value="P:regulation of cell shape"/>
    <property type="evidence" value="ECO:0007669"/>
    <property type="project" value="UniProtKB-KW"/>
</dbReference>
<dbReference type="Gene3D" id="3.90.190.20">
    <property type="entry name" value="Mur ligase, C-terminal domain"/>
    <property type="match status" value="1"/>
</dbReference>
<dbReference type="Gene3D" id="3.40.1190.10">
    <property type="entry name" value="Mur-like, catalytic domain"/>
    <property type="match status" value="1"/>
</dbReference>
<dbReference type="Gene3D" id="3.40.50.720">
    <property type="entry name" value="NAD(P)-binding Rossmann-like Domain"/>
    <property type="match status" value="1"/>
</dbReference>
<dbReference type="HAMAP" id="MF_00639">
    <property type="entry name" value="MurD"/>
    <property type="match status" value="1"/>
</dbReference>
<dbReference type="InterPro" id="IPR036565">
    <property type="entry name" value="Mur-like_cat_sf"/>
</dbReference>
<dbReference type="InterPro" id="IPR004101">
    <property type="entry name" value="Mur_ligase_C"/>
</dbReference>
<dbReference type="InterPro" id="IPR036615">
    <property type="entry name" value="Mur_ligase_C_dom_sf"/>
</dbReference>
<dbReference type="InterPro" id="IPR013221">
    <property type="entry name" value="Mur_ligase_cen"/>
</dbReference>
<dbReference type="InterPro" id="IPR005762">
    <property type="entry name" value="MurD"/>
</dbReference>
<dbReference type="NCBIfam" id="TIGR01087">
    <property type="entry name" value="murD"/>
    <property type="match status" value="1"/>
</dbReference>
<dbReference type="PANTHER" id="PTHR43692">
    <property type="entry name" value="UDP-N-ACETYLMURAMOYLALANINE--D-GLUTAMATE LIGASE"/>
    <property type="match status" value="1"/>
</dbReference>
<dbReference type="PANTHER" id="PTHR43692:SF1">
    <property type="entry name" value="UDP-N-ACETYLMURAMOYLALANINE--D-GLUTAMATE LIGASE"/>
    <property type="match status" value="1"/>
</dbReference>
<dbReference type="Pfam" id="PF02875">
    <property type="entry name" value="Mur_ligase_C"/>
    <property type="match status" value="1"/>
</dbReference>
<dbReference type="Pfam" id="PF08245">
    <property type="entry name" value="Mur_ligase_M"/>
    <property type="match status" value="1"/>
</dbReference>
<dbReference type="Pfam" id="PF21799">
    <property type="entry name" value="MurD-like_N"/>
    <property type="match status" value="1"/>
</dbReference>
<dbReference type="SUPFAM" id="SSF51984">
    <property type="entry name" value="MurCD N-terminal domain"/>
    <property type="match status" value="1"/>
</dbReference>
<dbReference type="SUPFAM" id="SSF53623">
    <property type="entry name" value="MurD-like peptide ligases, catalytic domain"/>
    <property type="match status" value="1"/>
</dbReference>
<dbReference type="SUPFAM" id="SSF53244">
    <property type="entry name" value="MurD-like peptide ligases, peptide-binding domain"/>
    <property type="match status" value="1"/>
</dbReference>
<proteinExistence type="inferred from homology"/>